<feature type="chain" id="PRO_1000100525" description="Adenylate kinase">
    <location>
        <begin position="1"/>
        <end position="215"/>
    </location>
</feature>
<feature type="region of interest" description="NMP" evidence="1">
    <location>
        <begin position="30"/>
        <end position="60"/>
    </location>
</feature>
<feature type="region of interest" description="LID" evidence="1">
    <location>
        <begin position="123"/>
        <end position="160"/>
    </location>
</feature>
<feature type="binding site" evidence="1">
    <location>
        <begin position="10"/>
        <end position="15"/>
    </location>
    <ligand>
        <name>ATP</name>
        <dbReference type="ChEBI" id="CHEBI:30616"/>
    </ligand>
</feature>
<feature type="binding site" evidence="1">
    <location>
        <position position="31"/>
    </location>
    <ligand>
        <name>AMP</name>
        <dbReference type="ChEBI" id="CHEBI:456215"/>
    </ligand>
</feature>
<feature type="binding site" evidence="1">
    <location>
        <position position="36"/>
    </location>
    <ligand>
        <name>AMP</name>
        <dbReference type="ChEBI" id="CHEBI:456215"/>
    </ligand>
</feature>
<feature type="binding site" evidence="1">
    <location>
        <begin position="58"/>
        <end position="60"/>
    </location>
    <ligand>
        <name>AMP</name>
        <dbReference type="ChEBI" id="CHEBI:456215"/>
    </ligand>
</feature>
<feature type="binding site" evidence="1">
    <location>
        <begin position="86"/>
        <end position="89"/>
    </location>
    <ligand>
        <name>AMP</name>
        <dbReference type="ChEBI" id="CHEBI:456215"/>
    </ligand>
</feature>
<feature type="binding site" evidence="1">
    <location>
        <position position="93"/>
    </location>
    <ligand>
        <name>AMP</name>
        <dbReference type="ChEBI" id="CHEBI:456215"/>
    </ligand>
</feature>
<feature type="binding site" evidence="1">
    <location>
        <position position="124"/>
    </location>
    <ligand>
        <name>ATP</name>
        <dbReference type="ChEBI" id="CHEBI:30616"/>
    </ligand>
</feature>
<feature type="binding site" evidence="1">
    <location>
        <begin position="133"/>
        <end position="134"/>
    </location>
    <ligand>
        <name>ATP</name>
        <dbReference type="ChEBI" id="CHEBI:30616"/>
    </ligand>
</feature>
<feature type="binding site" evidence="1">
    <location>
        <position position="157"/>
    </location>
    <ligand>
        <name>AMP</name>
        <dbReference type="ChEBI" id="CHEBI:456215"/>
    </ligand>
</feature>
<feature type="binding site" evidence="1">
    <location>
        <position position="168"/>
    </location>
    <ligand>
        <name>AMP</name>
        <dbReference type="ChEBI" id="CHEBI:456215"/>
    </ligand>
</feature>
<feature type="binding site" evidence="1">
    <location>
        <position position="201"/>
    </location>
    <ligand>
        <name>ATP</name>
        <dbReference type="ChEBI" id="CHEBI:30616"/>
    </ligand>
</feature>
<comment type="function">
    <text evidence="1">Catalyzes the reversible transfer of the terminal phosphate group between ATP and AMP. Plays an important role in cellular energy homeostasis and in adenine nucleotide metabolism.</text>
</comment>
<comment type="catalytic activity">
    <reaction evidence="1">
        <text>AMP + ATP = 2 ADP</text>
        <dbReference type="Rhea" id="RHEA:12973"/>
        <dbReference type="ChEBI" id="CHEBI:30616"/>
        <dbReference type="ChEBI" id="CHEBI:456215"/>
        <dbReference type="ChEBI" id="CHEBI:456216"/>
        <dbReference type="EC" id="2.7.4.3"/>
    </reaction>
</comment>
<comment type="pathway">
    <text evidence="1">Purine metabolism; AMP biosynthesis via salvage pathway; AMP from ADP: step 1/1.</text>
</comment>
<comment type="subunit">
    <text evidence="1">Monomer.</text>
</comment>
<comment type="subcellular location">
    <subcellularLocation>
        <location evidence="1">Cytoplasm</location>
    </subcellularLocation>
</comment>
<comment type="domain">
    <text evidence="1">Consists of three domains, a large central CORE domain and two small peripheral domains, NMPbind and LID, which undergo movements during catalysis. The LID domain closes over the site of phosphoryl transfer upon ATP binding. Assembling and dissambling the active center during each catalytic cycle provides an effective means to prevent ATP hydrolysis.</text>
</comment>
<comment type="similarity">
    <text evidence="1">Belongs to the adenylate kinase family.</text>
</comment>
<reference key="1">
    <citation type="journal article" date="2008" name="BMC Genomics">
        <title>The genome sequence of the fish pathogen Aliivibrio salmonicida strain LFI1238 shows extensive evidence of gene decay.</title>
        <authorList>
            <person name="Hjerde E."/>
            <person name="Lorentzen M.S."/>
            <person name="Holden M.T."/>
            <person name="Seeger K."/>
            <person name="Paulsen S."/>
            <person name="Bason N."/>
            <person name="Churcher C."/>
            <person name="Harris D."/>
            <person name="Norbertczak H."/>
            <person name="Quail M.A."/>
            <person name="Sanders S."/>
            <person name="Thurston S."/>
            <person name="Parkhill J."/>
            <person name="Willassen N.P."/>
            <person name="Thomson N.R."/>
        </authorList>
    </citation>
    <scope>NUCLEOTIDE SEQUENCE [LARGE SCALE GENOMIC DNA]</scope>
    <source>
        <strain>LFI1238</strain>
    </source>
</reference>
<gene>
    <name evidence="1" type="primary">adk</name>
    <name type="ordered locus">VSAL_I0815</name>
</gene>
<evidence type="ECO:0000255" key="1">
    <source>
        <dbReference type="HAMAP-Rule" id="MF_00235"/>
    </source>
</evidence>
<protein>
    <recommendedName>
        <fullName evidence="1">Adenylate kinase</fullName>
        <shortName evidence="1">AK</shortName>
        <ecNumber evidence="1">2.7.4.3</ecNumber>
    </recommendedName>
    <alternativeName>
        <fullName evidence="1">ATP-AMP transphosphorylase</fullName>
    </alternativeName>
    <alternativeName>
        <fullName evidence="1">ATP:AMP phosphotransferase</fullName>
    </alternativeName>
    <alternativeName>
        <fullName evidence="1">Adenylate monophosphate kinase</fullName>
    </alternativeName>
</protein>
<dbReference type="EC" id="2.7.4.3" evidence="1"/>
<dbReference type="EMBL" id="FM178379">
    <property type="protein sequence ID" value="CAQ78500.1"/>
    <property type="molecule type" value="Genomic_DNA"/>
</dbReference>
<dbReference type="RefSeq" id="WP_012549604.1">
    <property type="nucleotide sequence ID" value="NC_011312.1"/>
</dbReference>
<dbReference type="SMR" id="B6EHK0"/>
<dbReference type="KEGG" id="vsa:VSAL_I0815"/>
<dbReference type="eggNOG" id="COG0563">
    <property type="taxonomic scope" value="Bacteria"/>
</dbReference>
<dbReference type="HOGENOM" id="CLU_032354_1_2_6"/>
<dbReference type="UniPathway" id="UPA00588">
    <property type="reaction ID" value="UER00649"/>
</dbReference>
<dbReference type="Proteomes" id="UP000001730">
    <property type="component" value="Chromosome 1"/>
</dbReference>
<dbReference type="GO" id="GO:0005737">
    <property type="term" value="C:cytoplasm"/>
    <property type="evidence" value="ECO:0007669"/>
    <property type="project" value="UniProtKB-SubCell"/>
</dbReference>
<dbReference type="GO" id="GO:0004017">
    <property type="term" value="F:adenylate kinase activity"/>
    <property type="evidence" value="ECO:0007669"/>
    <property type="project" value="UniProtKB-UniRule"/>
</dbReference>
<dbReference type="GO" id="GO:0005524">
    <property type="term" value="F:ATP binding"/>
    <property type="evidence" value="ECO:0007669"/>
    <property type="project" value="UniProtKB-UniRule"/>
</dbReference>
<dbReference type="GO" id="GO:0044209">
    <property type="term" value="P:AMP salvage"/>
    <property type="evidence" value="ECO:0007669"/>
    <property type="project" value="UniProtKB-UniRule"/>
</dbReference>
<dbReference type="CDD" id="cd01428">
    <property type="entry name" value="ADK"/>
    <property type="match status" value="1"/>
</dbReference>
<dbReference type="FunFam" id="3.40.50.300:FF:000106">
    <property type="entry name" value="Adenylate kinase mitochondrial"/>
    <property type="match status" value="1"/>
</dbReference>
<dbReference type="Gene3D" id="3.40.50.300">
    <property type="entry name" value="P-loop containing nucleotide triphosphate hydrolases"/>
    <property type="match status" value="1"/>
</dbReference>
<dbReference type="HAMAP" id="MF_00235">
    <property type="entry name" value="Adenylate_kinase_Adk"/>
    <property type="match status" value="1"/>
</dbReference>
<dbReference type="InterPro" id="IPR006259">
    <property type="entry name" value="Adenyl_kin_sub"/>
</dbReference>
<dbReference type="InterPro" id="IPR000850">
    <property type="entry name" value="Adenylat/UMP-CMP_kin"/>
</dbReference>
<dbReference type="InterPro" id="IPR033690">
    <property type="entry name" value="Adenylat_kinase_CS"/>
</dbReference>
<dbReference type="InterPro" id="IPR007862">
    <property type="entry name" value="Adenylate_kinase_lid-dom"/>
</dbReference>
<dbReference type="InterPro" id="IPR027417">
    <property type="entry name" value="P-loop_NTPase"/>
</dbReference>
<dbReference type="NCBIfam" id="TIGR01351">
    <property type="entry name" value="adk"/>
    <property type="match status" value="1"/>
</dbReference>
<dbReference type="NCBIfam" id="NF001379">
    <property type="entry name" value="PRK00279.1-1"/>
    <property type="match status" value="1"/>
</dbReference>
<dbReference type="NCBIfam" id="NF001380">
    <property type="entry name" value="PRK00279.1-2"/>
    <property type="match status" value="1"/>
</dbReference>
<dbReference type="NCBIfam" id="NF001381">
    <property type="entry name" value="PRK00279.1-3"/>
    <property type="match status" value="1"/>
</dbReference>
<dbReference type="PANTHER" id="PTHR23359">
    <property type="entry name" value="NUCLEOTIDE KINASE"/>
    <property type="match status" value="1"/>
</dbReference>
<dbReference type="Pfam" id="PF00406">
    <property type="entry name" value="ADK"/>
    <property type="match status" value="1"/>
</dbReference>
<dbReference type="Pfam" id="PF05191">
    <property type="entry name" value="ADK_lid"/>
    <property type="match status" value="1"/>
</dbReference>
<dbReference type="PRINTS" id="PR00094">
    <property type="entry name" value="ADENYLTKNASE"/>
</dbReference>
<dbReference type="SUPFAM" id="SSF52540">
    <property type="entry name" value="P-loop containing nucleoside triphosphate hydrolases"/>
    <property type="match status" value="1"/>
</dbReference>
<dbReference type="PROSITE" id="PS00113">
    <property type="entry name" value="ADENYLATE_KINASE"/>
    <property type="match status" value="1"/>
</dbReference>
<sequence>MRIILLGAPGAGKGTQAQFIMDKFGIPQISTGDMLRAAIIKAGTEMGKQAKSVIDAGQLVSDEIILGLVKERIAQEDCAKGFLLDGFPRTIPQADGLKENGVSIDYVLEFDVADEVIVERMSGRRAHLPSGRTYHVTFNPSKVEGQDDVTGEPLVIREDDKPETVLARLGVYHEQTAPLIAYYTKEAEAGKTEYLKFDGTKLVAEVSAEIEKVLS</sequence>
<keyword id="KW-0067">ATP-binding</keyword>
<keyword id="KW-0963">Cytoplasm</keyword>
<keyword id="KW-0418">Kinase</keyword>
<keyword id="KW-0545">Nucleotide biosynthesis</keyword>
<keyword id="KW-0547">Nucleotide-binding</keyword>
<keyword id="KW-0808">Transferase</keyword>
<accession>B6EHK0</accession>
<organism>
    <name type="scientific">Aliivibrio salmonicida (strain LFI1238)</name>
    <name type="common">Vibrio salmonicida (strain LFI1238)</name>
    <dbReference type="NCBI Taxonomy" id="316275"/>
    <lineage>
        <taxon>Bacteria</taxon>
        <taxon>Pseudomonadati</taxon>
        <taxon>Pseudomonadota</taxon>
        <taxon>Gammaproteobacteria</taxon>
        <taxon>Vibrionales</taxon>
        <taxon>Vibrionaceae</taxon>
        <taxon>Aliivibrio</taxon>
    </lineage>
</organism>
<proteinExistence type="inferred from homology"/>
<name>KAD_ALISL</name>